<sequence length="399" mass="43251">MIKKELPDEFGHFGPYGGMFVADTLVSALKQLEHAYTKYRNDQDFLSELHTELKDYVGRPNPLYHAVHLSKKIGGAQIYLKREDLNHTGAHKINNTIGQALLAKRMGKTRVIAETGAGQHGVATATVAAKFGFQCVVYMGSEDIKRQSSNVYRMKLLGAEVVPVTSGSKTLKDALNEALRDWVSHVDDTFYIIGTVAGPHPYPQMVRDFQAIIGVEARAQHMEKTGRLPDALVACVGGGSNAIGLFYPFLNDQSVMIYGVEAGGKGIETGEHSASLIAGKPGVLHGNRTYLLCDEYGQVKDTHSVSAGLDYPGVGPEHAYLKDTGRVIYKAINDSEALDAFRLLTHTEGIIPALESSHAVAYAIQLAKTMSKEQSIIVNLSGRGDKDMHTVAAIDGITI</sequence>
<evidence type="ECO:0000255" key="1">
    <source>
        <dbReference type="HAMAP-Rule" id="MF_00133"/>
    </source>
</evidence>
<protein>
    <recommendedName>
        <fullName evidence="1">Tryptophan synthase beta chain</fullName>
        <ecNumber evidence="1">4.2.1.20</ecNumber>
    </recommendedName>
</protein>
<reference key="1">
    <citation type="submission" date="2006-11" db="EMBL/GenBank/DDBJ databases">
        <title>Identification and characterization of a new conjugation/ type IVA secretion system (trb/tra) of L. pneumophila Corby localized on a mobile genomic island.</title>
        <authorList>
            <person name="Gloeckner G."/>
            <person name="Albert-Weissenberger C."/>
            <person name="Weinmann E."/>
            <person name="Jacobi S."/>
            <person name="Schunder E."/>
            <person name="Steinert M."/>
            <person name="Buchrieser C."/>
            <person name="Hacker J."/>
            <person name="Heuner K."/>
        </authorList>
    </citation>
    <scope>NUCLEOTIDE SEQUENCE [LARGE SCALE GENOMIC DNA]</scope>
    <source>
        <strain>Corby</strain>
    </source>
</reference>
<organism>
    <name type="scientific">Legionella pneumophila (strain Corby)</name>
    <dbReference type="NCBI Taxonomy" id="400673"/>
    <lineage>
        <taxon>Bacteria</taxon>
        <taxon>Pseudomonadati</taxon>
        <taxon>Pseudomonadota</taxon>
        <taxon>Gammaproteobacteria</taxon>
        <taxon>Legionellales</taxon>
        <taxon>Legionellaceae</taxon>
        <taxon>Legionella</taxon>
    </lineage>
</organism>
<gene>
    <name evidence="1" type="primary">trpB</name>
    <name type="ordered locus">LPC_0729</name>
</gene>
<dbReference type="EC" id="4.2.1.20" evidence="1"/>
<dbReference type="EMBL" id="CP000675">
    <property type="protein sequence ID" value="ABQ54707.1"/>
    <property type="molecule type" value="Genomic_DNA"/>
</dbReference>
<dbReference type="RefSeq" id="WP_011946351.1">
    <property type="nucleotide sequence ID" value="NZ_JAPMSS010000002.1"/>
</dbReference>
<dbReference type="SMR" id="A5IBF7"/>
<dbReference type="KEGG" id="lpc:LPC_0729"/>
<dbReference type="HOGENOM" id="CLU_016734_3_1_6"/>
<dbReference type="UniPathway" id="UPA00035">
    <property type="reaction ID" value="UER00044"/>
</dbReference>
<dbReference type="GO" id="GO:0005737">
    <property type="term" value="C:cytoplasm"/>
    <property type="evidence" value="ECO:0007669"/>
    <property type="project" value="TreeGrafter"/>
</dbReference>
<dbReference type="GO" id="GO:0004834">
    <property type="term" value="F:tryptophan synthase activity"/>
    <property type="evidence" value="ECO:0007669"/>
    <property type="project" value="UniProtKB-UniRule"/>
</dbReference>
<dbReference type="CDD" id="cd06446">
    <property type="entry name" value="Trp-synth_B"/>
    <property type="match status" value="1"/>
</dbReference>
<dbReference type="FunFam" id="3.40.50.1100:FF:000001">
    <property type="entry name" value="Tryptophan synthase beta chain"/>
    <property type="match status" value="1"/>
</dbReference>
<dbReference type="FunFam" id="3.40.50.1100:FF:000004">
    <property type="entry name" value="Tryptophan synthase beta chain"/>
    <property type="match status" value="1"/>
</dbReference>
<dbReference type="Gene3D" id="3.40.50.1100">
    <property type="match status" value="2"/>
</dbReference>
<dbReference type="HAMAP" id="MF_00133">
    <property type="entry name" value="Trp_synth_beta"/>
    <property type="match status" value="1"/>
</dbReference>
<dbReference type="InterPro" id="IPR006653">
    <property type="entry name" value="Trp_synth_b_CS"/>
</dbReference>
<dbReference type="InterPro" id="IPR006654">
    <property type="entry name" value="Trp_synth_beta"/>
</dbReference>
<dbReference type="InterPro" id="IPR023026">
    <property type="entry name" value="Trp_synth_beta/beta-like"/>
</dbReference>
<dbReference type="InterPro" id="IPR001926">
    <property type="entry name" value="TrpB-like_PALP"/>
</dbReference>
<dbReference type="InterPro" id="IPR036052">
    <property type="entry name" value="TrpB-like_PALP_sf"/>
</dbReference>
<dbReference type="NCBIfam" id="TIGR00263">
    <property type="entry name" value="trpB"/>
    <property type="match status" value="1"/>
</dbReference>
<dbReference type="PANTHER" id="PTHR48077:SF3">
    <property type="entry name" value="TRYPTOPHAN SYNTHASE"/>
    <property type="match status" value="1"/>
</dbReference>
<dbReference type="PANTHER" id="PTHR48077">
    <property type="entry name" value="TRYPTOPHAN SYNTHASE-RELATED"/>
    <property type="match status" value="1"/>
</dbReference>
<dbReference type="Pfam" id="PF00291">
    <property type="entry name" value="PALP"/>
    <property type="match status" value="1"/>
</dbReference>
<dbReference type="PIRSF" id="PIRSF001413">
    <property type="entry name" value="Trp_syn_beta"/>
    <property type="match status" value="1"/>
</dbReference>
<dbReference type="SUPFAM" id="SSF53686">
    <property type="entry name" value="Tryptophan synthase beta subunit-like PLP-dependent enzymes"/>
    <property type="match status" value="1"/>
</dbReference>
<dbReference type="PROSITE" id="PS00168">
    <property type="entry name" value="TRP_SYNTHASE_BETA"/>
    <property type="match status" value="1"/>
</dbReference>
<proteinExistence type="inferred from homology"/>
<comment type="function">
    <text evidence="1">The beta subunit is responsible for the synthesis of L-tryptophan from indole and L-serine.</text>
</comment>
<comment type="catalytic activity">
    <reaction evidence="1">
        <text>(1S,2R)-1-C-(indol-3-yl)glycerol 3-phosphate + L-serine = D-glyceraldehyde 3-phosphate + L-tryptophan + H2O</text>
        <dbReference type="Rhea" id="RHEA:10532"/>
        <dbReference type="ChEBI" id="CHEBI:15377"/>
        <dbReference type="ChEBI" id="CHEBI:33384"/>
        <dbReference type="ChEBI" id="CHEBI:57912"/>
        <dbReference type="ChEBI" id="CHEBI:58866"/>
        <dbReference type="ChEBI" id="CHEBI:59776"/>
        <dbReference type="EC" id="4.2.1.20"/>
    </reaction>
</comment>
<comment type="cofactor">
    <cofactor evidence="1">
        <name>pyridoxal 5'-phosphate</name>
        <dbReference type="ChEBI" id="CHEBI:597326"/>
    </cofactor>
</comment>
<comment type="pathway">
    <text evidence="1">Amino-acid biosynthesis; L-tryptophan biosynthesis; L-tryptophan from chorismate: step 5/5.</text>
</comment>
<comment type="subunit">
    <text evidence="1">Tetramer of two alpha and two beta chains.</text>
</comment>
<comment type="similarity">
    <text evidence="1">Belongs to the TrpB family.</text>
</comment>
<name>TRPB_LEGPC</name>
<keyword id="KW-0028">Amino-acid biosynthesis</keyword>
<keyword id="KW-0057">Aromatic amino acid biosynthesis</keyword>
<keyword id="KW-0456">Lyase</keyword>
<keyword id="KW-0663">Pyridoxal phosphate</keyword>
<keyword id="KW-0822">Tryptophan biosynthesis</keyword>
<accession>A5IBF7</accession>
<feature type="chain" id="PRO_1000076393" description="Tryptophan synthase beta chain">
    <location>
        <begin position="1"/>
        <end position="399"/>
    </location>
</feature>
<feature type="modified residue" description="N6-(pyridoxal phosphate)lysine" evidence="1">
    <location>
        <position position="92"/>
    </location>
</feature>